<accession>Q5UZW7</accession>
<evidence type="ECO:0000255" key="1">
    <source>
        <dbReference type="HAMAP-Rule" id="MF_01615"/>
    </source>
</evidence>
<name>PDXT_HALMA</name>
<dbReference type="EC" id="4.3.3.6" evidence="1"/>
<dbReference type="EC" id="3.5.1.2" evidence="1"/>
<dbReference type="EMBL" id="AY596297">
    <property type="protein sequence ID" value="AAV47186.1"/>
    <property type="molecule type" value="Genomic_DNA"/>
</dbReference>
<dbReference type="RefSeq" id="WP_011224183.1">
    <property type="nucleotide sequence ID" value="NC_006396.1"/>
</dbReference>
<dbReference type="SMR" id="Q5UZW7"/>
<dbReference type="STRING" id="272569.rrnAC2369"/>
<dbReference type="PaxDb" id="272569-rrnAC2369"/>
<dbReference type="EnsemblBacteria" id="AAV47186">
    <property type="protein sequence ID" value="AAV47186"/>
    <property type="gene ID" value="rrnAC2369"/>
</dbReference>
<dbReference type="GeneID" id="40153264"/>
<dbReference type="KEGG" id="hma:rrnAC2369"/>
<dbReference type="PATRIC" id="fig|272569.17.peg.2986"/>
<dbReference type="eggNOG" id="arCOG00034">
    <property type="taxonomic scope" value="Archaea"/>
</dbReference>
<dbReference type="HOGENOM" id="CLU_069674_2_0_2"/>
<dbReference type="UniPathway" id="UPA00245"/>
<dbReference type="Proteomes" id="UP000001169">
    <property type="component" value="Chromosome I"/>
</dbReference>
<dbReference type="GO" id="GO:0005829">
    <property type="term" value="C:cytosol"/>
    <property type="evidence" value="ECO:0007669"/>
    <property type="project" value="TreeGrafter"/>
</dbReference>
<dbReference type="GO" id="GO:1903600">
    <property type="term" value="C:glutaminase complex"/>
    <property type="evidence" value="ECO:0007669"/>
    <property type="project" value="TreeGrafter"/>
</dbReference>
<dbReference type="GO" id="GO:0004359">
    <property type="term" value="F:glutaminase activity"/>
    <property type="evidence" value="ECO:0007669"/>
    <property type="project" value="UniProtKB-UniRule"/>
</dbReference>
<dbReference type="GO" id="GO:0036381">
    <property type="term" value="F:pyridoxal 5'-phosphate synthase (glutamine hydrolysing) activity"/>
    <property type="evidence" value="ECO:0007669"/>
    <property type="project" value="UniProtKB-UniRule"/>
</dbReference>
<dbReference type="GO" id="GO:0006543">
    <property type="term" value="P:glutamine catabolic process"/>
    <property type="evidence" value="ECO:0007669"/>
    <property type="project" value="UniProtKB-UniRule"/>
</dbReference>
<dbReference type="GO" id="GO:0042823">
    <property type="term" value="P:pyridoxal phosphate biosynthetic process"/>
    <property type="evidence" value="ECO:0007669"/>
    <property type="project" value="UniProtKB-UniRule"/>
</dbReference>
<dbReference type="GO" id="GO:0008614">
    <property type="term" value="P:pyridoxine metabolic process"/>
    <property type="evidence" value="ECO:0007669"/>
    <property type="project" value="TreeGrafter"/>
</dbReference>
<dbReference type="CDD" id="cd01749">
    <property type="entry name" value="GATase1_PB"/>
    <property type="match status" value="1"/>
</dbReference>
<dbReference type="FunFam" id="3.40.50.880:FF:000010">
    <property type="entry name" value="uncharacterized protein LOC100176842 isoform X2"/>
    <property type="match status" value="1"/>
</dbReference>
<dbReference type="Gene3D" id="3.40.50.880">
    <property type="match status" value="1"/>
</dbReference>
<dbReference type="HAMAP" id="MF_01615">
    <property type="entry name" value="PdxT"/>
    <property type="match status" value="1"/>
</dbReference>
<dbReference type="InterPro" id="IPR029062">
    <property type="entry name" value="Class_I_gatase-like"/>
</dbReference>
<dbReference type="InterPro" id="IPR002161">
    <property type="entry name" value="PdxT/SNO"/>
</dbReference>
<dbReference type="InterPro" id="IPR021196">
    <property type="entry name" value="PdxT/SNO_CS"/>
</dbReference>
<dbReference type="NCBIfam" id="TIGR03800">
    <property type="entry name" value="PLP_synth_Pdx2"/>
    <property type="match status" value="1"/>
</dbReference>
<dbReference type="PANTHER" id="PTHR31559">
    <property type="entry name" value="PYRIDOXAL 5'-PHOSPHATE SYNTHASE SUBUNIT SNO"/>
    <property type="match status" value="1"/>
</dbReference>
<dbReference type="PANTHER" id="PTHR31559:SF0">
    <property type="entry name" value="PYRIDOXAL 5'-PHOSPHATE SYNTHASE SUBUNIT SNO1-RELATED"/>
    <property type="match status" value="1"/>
</dbReference>
<dbReference type="Pfam" id="PF01174">
    <property type="entry name" value="SNO"/>
    <property type="match status" value="1"/>
</dbReference>
<dbReference type="PIRSF" id="PIRSF005639">
    <property type="entry name" value="Glut_amidoT_SNO"/>
    <property type="match status" value="1"/>
</dbReference>
<dbReference type="SUPFAM" id="SSF52317">
    <property type="entry name" value="Class I glutamine amidotransferase-like"/>
    <property type="match status" value="1"/>
</dbReference>
<dbReference type="PROSITE" id="PS01236">
    <property type="entry name" value="PDXT_SNO_1"/>
    <property type="match status" value="1"/>
</dbReference>
<dbReference type="PROSITE" id="PS51130">
    <property type="entry name" value="PDXT_SNO_2"/>
    <property type="match status" value="1"/>
</dbReference>
<comment type="function">
    <text evidence="1">Catalyzes the hydrolysis of glutamine to glutamate and ammonia as part of the biosynthesis of pyridoxal 5'-phosphate. The resulting ammonia molecule is channeled to the active site of PdxS.</text>
</comment>
<comment type="catalytic activity">
    <reaction evidence="1">
        <text>aldehydo-D-ribose 5-phosphate + D-glyceraldehyde 3-phosphate + L-glutamine = pyridoxal 5'-phosphate + L-glutamate + phosphate + 3 H2O + H(+)</text>
        <dbReference type="Rhea" id="RHEA:31507"/>
        <dbReference type="ChEBI" id="CHEBI:15377"/>
        <dbReference type="ChEBI" id="CHEBI:15378"/>
        <dbReference type="ChEBI" id="CHEBI:29985"/>
        <dbReference type="ChEBI" id="CHEBI:43474"/>
        <dbReference type="ChEBI" id="CHEBI:58273"/>
        <dbReference type="ChEBI" id="CHEBI:58359"/>
        <dbReference type="ChEBI" id="CHEBI:59776"/>
        <dbReference type="ChEBI" id="CHEBI:597326"/>
        <dbReference type="EC" id="4.3.3.6"/>
    </reaction>
</comment>
<comment type="catalytic activity">
    <reaction evidence="1">
        <text>L-glutamine + H2O = L-glutamate + NH4(+)</text>
        <dbReference type="Rhea" id="RHEA:15889"/>
        <dbReference type="ChEBI" id="CHEBI:15377"/>
        <dbReference type="ChEBI" id="CHEBI:28938"/>
        <dbReference type="ChEBI" id="CHEBI:29985"/>
        <dbReference type="ChEBI" id="CHEBI:58359"/>
        <dbReference type="EC" id="3.5.1.2"/>
    </reaction>
</comment>
<comment type="pathway">
    <text evidence="1">Cofactor biosynthesis; pyridoxal 5'-phosphate biosynthesis.</text>
</comment>
<comment type="subunit">
    <text evidence="1">In the presence of PdxS, forms a dodecamer of heterodimers. Only shows activity in the heterodimer.</text>
</comment>
<comment type="similarity">
    <text evidence="1">Belongs to the glutaminase PdxT/SNO family.</text>
</comment>
<protein>
    <recommendedName>
        <fullName evidence="1">Pyridoxal 5'-phosphate synthase subunit PdxT</fullName>
        <ecNumber evidence="1">4.3.3.6</ecNumber>
    </recommendedName>
    <alternativeName>
        <fullName evidence="1">Pdx2</fullName>
    </alternativeName>
    <alternativeName>
        <fullName evidence="1">Pyridoxal 5'-phosphate synthase glutaminase subunit</fullName>
        <ecNumber evidence="1">3.5.1.2</ecNumber>
    </alternativeName>
</protein>
<sequence length="197" mass="21179">MTLRAGVLAVQGDVSEHGDAIERAAAAHDRTAEVVEIREAGLVPDCDVLLLPGGESTTISRLIHREGIAEEIESHVEAGKPVLATCAGLIVSATDAQDDRVDTLNVIDVSVERNAFGRQRDSFEAPLDVTGLNESFPAVFIRAPVIDYVGEDVEVLATWDDRPVAVRDGPVVGTSFHPELTEDPRIHDLAFFDSVES</sequence>
<keyword id="KW-0315">Glutamine amidotransferase</keyword>
<keyword id="KW-0378">Hydrolase</keyword>
<keyword id="KW-0456">Lyase</keyword>
<keyword id="KW-0663">Pyridoxal phosphate</keyword>
<keyword id="KW-1185">Reference proteome</keyword>
<proteinExistence type="inferred from homology"/>
<gene>
    <name evidence="1" type="primary">pdxT</name>
    <name type="ordered locus">rrnAC2369</name>
</gene>
<feature type="chain" id="PRO_0000135677" description="Pyridoxal 5'-phosphate synthase subunit PdxT">
    <location>
        <begin position="1"/>
        <end position="197"/>
    </location>
</feature>
<feature type="active site" description="Nucleophile" evidence="1">
    <location>
        <position position="86"/>
    </location>
</feature>
<feature type="active site" description="Charge relay system" evidence="1">
    <location>
        <position position="177"/>
    </location>
</feature>
<feature type="active site" description="Charge relay system" evidence="1">
    <location>
        <position position="179"/>
    </location>
</feature>
<feature type="binding site" evidence="1">
    <location>
        <begin position="54"/>
        <end position="56"/>
    </location>
    <ligand>
        <name>L-glutamine</name>
        <dbReference type="ChEBI" id="CHEBI:58359"/>
    </ligand>
</feature>
<feature type="binding site" evidence="1">
    <location>
        <position position="113"/>
    </location>
    <ligand>
        <name>L-glutamine</name>
        <dbReference type="ChEBI" id="CHEBI:58359"/>
    </ligand>
</feature>
<feature type="binding site" evidence="1">
    <location>
        <begin position="141"/>
        <end position="142"/>
    </location>
    <ligand>
        <name>L-glutamine</name>
        <dbReference type="ChEBI" id="CHEBI:58359"/>
    </ligand>
</feature>
<organism>
    <name type="scientific">Haloarcula marismortui (strain ATCC 43049 / DSM 3752 / JCM 8966 / VKM B-1809)</name>
    <name type="common">Halobacterium marismortui</name>
    <dbReference type="NCBI Taxonomy" id="272569"/>
    <lineage>
        <taxon>Archaea</taxon>
        <taxon>Methanobacteriati</taxon>
        <taxon>Methanobacteriota</taxon>
        <taxon>Stenosarchaea group</taxon>
        <taxon>Halobacteria</taxon>
        <taxon>Halobacteriales</taxon>
        <taxon>Haloarculaceae</taxon>
        <taxon>Haloarcula</taxon>
    </lineage>
</organism>
<reference key="1">
    <citation type="journal article" date="2004" name="Genome Res.">
        <title>Genome sequence of Haloarcula marismortui: a halophilic archaeon from the Dead Sea.</title>
        <authorList>
            <person name="Baliga N.S."/>
            <person name="Bonneau R."/>
            <person name="Facciotti M.T."/>
            <person name="Pan M."/>
            <person name="Glusman G."/>
            <person name="Deutsch E.W."/>
            <person name="Shannon P."/>
            <person name="Chiu Y."/>
            <person name="Weng R.S."/>
            <person name="Gan R.R."/>
            <person name="Hung P."/>
            <person name="Date S.V."/>
            <person name="Marcotte E."/>
            <person name="Hood L."/>
            <person name="Ng W.V."/>
        </authorList>
    </citation>
    <scope>NUCLEOTIDE SEQUENCE [LARGE SCALE GENOMIC DNA]</scope>
    <source>
        <strain>ATCC 43049 / DSM 3752 / JCM 8966 / VKM B-1809</strain>
    </source>
</reference>